<comment type="function">
    <text evidence="1">Nucleotide-binding protein.</text>
</comment>
<comment type="similarity">
    <text evidence="1">Belongs to the YajQ family.</text>
</comment>
<organism>
    <name type="scientific">Pseudomonas syringae pv. tomato (strain ATCC BAA-871 / DC3000)</name>
    <dbReference type="NCBI Taxonomy" id="223283"/>
    <lineage>
        <taxon>Bacteria</taxon>
        <taxon>Pseudomonadati</taxon>
        <taxon>Pseudomonadota</taxon>
        <taxon>Gammaproteobacteria</taxon>
        <taxon>Pseudomonadales</taxon>
        <taxon>Pseudomonadaceae</taxon>
        <taxon>Pseudomonas</taxon>
    </lineage>
</organism>
<evidence type="ECO:0000255" key="1">
    <source>
        <dbReference type="HAMAP-Rule" id="MF_00632"/>
    </source>
</evidence>
<keyword id="KW-0547">Nucleotide-binding</keyword>
<keyword id="KW-1185">Reference proteome</keyword>
<proteinExistence type="inferred from homology"/>
<reference key="1">
    <citation type="journal article" date="2003" name="Proc. Natl. Acad. Sci. U.S.A.">
        <title>The complete genome sequence of the Arabidopsis and tomato pathogen Pseudomonas syringae pv. tomato DC3000.</title>
        <authorList>
            <person name="Buell C.R."/>
            <person name="Joardar V."/>
            <person name="Lindeberg M."/>
            <person name="Selengut J."/>
            <person name="Paulsen I.T."/>
            <person name="Gwinn M.L."/>
            <person name="Dodson R.J."/>
            <person name="DeBoy R.T."/>
            <person name="Durkin A.S."/>
            <person name="Kolonay J.F."/>
            <person name="Madupu R."/>
            <person name="Daugherty S.C."/>
            <person name="Brinkac L.M."/>
            <person name="Beanan M.J."/>
            <person name="Haft D.H."/>
            <person name="Nelson W.C."/>
            <person name="Davidsen T.M."/>
            <person name="Zafar N."/>
            <person name="Zhou L."/>
            <person name="Liu J."/>
            <person name="Yuan Q."/>
            <person name="Khouri H.M."/>
            <person name="Fedorova N.B."/>
            <person name="Tran B."/>
            <person name="Russell D."/>
            <person name="Berry K.J."/>
            <person name="Utterback T.R."/>
            <person name="Van Aken S.E."/>
            <person name="Feldblyum T.V."/>
            <person name="D'Ascenzo M."/>
            <person name="Deng W.-L."/>
            <person name="Ramos A.R."/>
            <person name="Alfano J.R."/>
            <person name="Cartinhour S."/>
            <person name="Chatterjee A.K."/>
            <person name="Delaney T.P."/>
            <person name="Lazarowitz S.G."/>
            <person name="Martin G.B."/>
            <person name="Schneider D.J."/>
            <person name="Tang X."/>
            <person name="Bender C.L."/>
            <person name="White O."/>
            <person name="Fraser C.M."/>
            <person name="Collmer A."/>
        </authorList>
    </citation>
    <scope>NUCLEOTIDE SEQUENCE [LARGE SCALE GENOMIC DNA]</scope>
    <source>
        <strain>ATCC BAA-871 / DC3000</strain>
    </source>
</reference>
<gene>
    <name type="ordered locus">PSPTO_4393</name>
</gene>
<feature type="chain" id="PRO_0000106195" description="Nucleotide-binding protein PSPTO_4393">
    <location>
        <begin position="1"/>
        <end position="159"/>
    </location>
</feature>
<sequence length="159" mass="17909">MPSFDVVSELDKHEVTNAVDNAIKELDRRYDLKGKGTFEFKELTVTLTAEADFQLEAMIEILKLALVKRKIDGKCLEVKDAYASGKLMKQEAVLREGIDKELAKKIVAHVKEAKLKVQAAIQGEQVRITGKKRDDLQEAIAALRAYDSGMPLQFNNFRD</sequence>
<dbReference type="EMBL" id="AE016853">
    <property type="protein sequence ID" value="AAO57842.1"/>
    <property type="molecule type" value="Genomic_DNA"/>
</dbReference>
<dbReference type="RefSeq" id="NP_794147.1">
    <property type="nucleotide sequence ID" value="NC_004578.1"/>
</dbReference>
<dbReference type="RefSeq" id="WP_003380977.1">
    <property type="nucleotide sequence ID" value="NC_004578.1"/>
</dbReference>
<dbReference type="SMR" id="Q87X00"/>
<dbReference type="STRING" id="223283.PSPTO_4393"/>
<dbReference type="KEGG" id="pst:PSPTO_4393"/>
<dbReference type="PATRIC" id="fig|223283.9.peg.4508"/>
<dbReference type="eggNOG" id="COG1666">
    <property type="taxonomic scope" value="Bacteria"/>
</dbReference>
<dbReference type="HOGENOM" id="CLU_099839_1_0_6"/>
<dbReference type="OrthoDB" id="9801447at2"/>
<dbReference type="PhylomeDB" id="Q87X00"/>
<dbReference type="Proteomes" id="UP000002515">
    <property type="component" value="Chromosome"/>
</dbReference>
<dbReference type="GO" id="GO:0005829">
    <property type="term" value="C:cytosol"/>
    <property type="evidence" value="ECO:0007669"/>
    <property type="project" value="TreeGrafter"/>
</dbReference>
<dbReference type="GO" id="GO:0000166">
    <property type="term" value="F:nucleotide binding"/>
    <property type="evidence" value="ECO:0007669"/>
    <property type="project" value="TreeGrafter"/>
</dbReference>
<dbReference type="CDD" id="cd11740">
    <property type="entry name" value="YajQ_like"/>
    <property type="match status" value="1"/>
</dbReference>
<dbReference type="Gene3D" id="3.30.70.860">
    <property type="match status" value="1"/>
</dbReference>
<dbReference type="Gene3D" id="3.30.70.990">
    <property type="entry name" value="YajQ-like, domain 2"/>
    <property type="match status" value="1"/>
</dbReference>
<dbReference type="HAMAP" id="MF_00632">
    <property type="entry name" value="YajQ"/>
    <property type="match status" value="1"/>
</dbReference>
<dbReference type="InterPro" id="IPR007551">
    <property type="entry name" value="DUF520"/>
</dbReference>
<dbReference type="InterPro" id="IPR035571">
    <property type="entry name" value="UPF0234-like_C"/>
</dbReference>
<dbReference type="InterPro" id="IPR035570">
    <property type="entry name" value="UPF0234_N"/>
</dbReference>
<dbReference type="InterPro" id="IPR036183">
    <property type="entry name" value="YajQ-like_sf"/>
</dbReference>
<dbReference type="NCBIfam" id="NF003819">
    <property type="entry name" value="PRK05412.1"/>
    <property type="match status" value="1"/>
</dbReference>
<dbReference type="PANTHER" id="PTHR30476">
    <property type="entry name" value="UPF0234 PROTEIN YAJQ"/>
    <property type="match status" value="1"/>
</dbReference>
<dbReference type="PANTHER" id="PTHR30476:SF0">
    <property type="entry name" value="UPF0234 PROTEIN YAJQ"/>
    <property type="match status" value="1"/>
</dbReference>
<dbReference type="Pfam" id="PF04461">
    <property type="entry name" value="DUF520"/>
    <property type="match status" value="1"/>
</dbReference>
<dbReference type="SUPFAM" id="SSF89963">
    <property type="entry name" value="YajQ-like"/>
    <property type="match status" value="2"/>
</dbReference>
<accession>Q87X00</accession>
<protein>
    <recommendedName>
        <fullName evidence="1">Nucleotide-binding protein PSPTO_4393</fullName>
    </recommendedName>
</protein>
<name>Y4393_PSESM</name>